<gene>
    <name evidence="1" type="primary">ileS</name>
    <name type="ordered locus">PMI0015</name>
</gene>
<comment type="function">
    <text evidence="1">Catalyzes the attachment of isoleucine to tRNA(Ile). As IleRS can inadvertently accommodate and process structurally similar amino acids such as valine, to avoid such errors it has two additional distinct tRNA(Ile)-dependent editing activities. One activity is designated as 'pretransfer' editing and involves the hydrolysis of activated Val-AMP. The other activity is designated 'posttransfer' editing and involves deacylation of mischarged Val-tRNA(Ile).</text>
</comment>
<comment type="catalytic activity">
    <reaction evidence="1">
        <text>tRNA(Ile) + L-isoleucine + ATP = L-isoleucyl-tRNA(Ile) + AMP + diphosphate</text>
        <dbReference type="Rhea" id="RHEA:11060"/>
        <dbReference type="Rhea" id="RHEA-COMP:9666"/>
        <dbReference type="Rhea" id="RHEA-COMP:9695"/>
        <dbReference type="ChEBI" id="CHEBI:30616"/>
        <dbReference type="ChEBI" id="CHEBI:33019"/>
        <dbReference type="ChEBI" id="CHEBI:58045"/>
        <dbReference type="ChEBI" id="CHEBI:78442"/>
        <dbReference type="ChEBI" id="CHEBI:78528"/>
        <dbReference type="ChEBI" id="CHEBI:456215"/>
        <dbReference type="EC" id="6.1.1.5"/>
    </reaction>
</comment>
<comment type="cofactor">
    <cofactor evidence="1">
        <name>Zn(2+)</name>
        <dbReference type="ChEBI" id="CHEBI:29105"/>
    </cofactor>
    <text evidence="1">Binds 1 zinc ion per subunit.</text>
</comment>
<comment type="subunit">
    <text evidence="1">Monomer.</text>
</comment>
<comment type="subcellular location">
    <subcellularLocation>
        <location evidence="1">Cytoplasm</location>
    </subcellularLocation>
</comment>
<comment type="domain">
    <text evidence="1">IleRS has two distinct active sites: one for aminoacylation and one for editing. The misactivated valine is translocated from the active site to the editing site, which sterically excludes the correctly activated isoleucine. The single editing site contains two valyl binding pockets, one specific for each substrate (Val-AMP or Val-tRNA(Ile)).</text>
</comment>
<comment type="similarity">
    <text evidence="1">Belongs to the class-I aminoacyl-tRNA synthetase family. IleS type 1 subfamily.</text>
</comment>
<reference key="1">
    <citation type="journal article" date="2008" name="J. Bacteriol.">
        <title>Complete genome sequence of uropathogenic Proteus mirabilis, a master of both adherence and motility.</title>
        <authorList>
            <person name="Pearson M.M."/>
            <person name="Sebaihia M."/>
            <person name="Churcher C."/>
            <person name="Quail M.A."/>
            <person name="Seshasayee A.S."/>
            <person name="Luscombe N.M."/>
            <person name="Abdellah Z."/>
            <person name="Arrosmith C."/>
            <person name="Atkin B."/>
            <person name="Chillingworth T."/>
            <person name="Hauser H."/>
            <person name="Jagels K."/>
            <person name="Moule S."/>
            <person name="Mungall K."/>
            <person name="Norbertczak H."/>
            <person name="Rabbinowitsch E."/>
            <person name="Walker D."/>
            <person name="Whithead S."/>
            <person name="Thomson N.R."/>
            <person name="Rather P.N."/>
            <person name="Parkhill J."/>
            <person name="Mobley H.L.T."/>
        </authorList>
    </citation>
    <scope>NUCLEOTIDE SEQUENCE [LARGE SCALE GENOMIC DNA]</scope>
    <source>
        <strain>HI4320</strain>
    </source>
</reference>
<keyword id="KW-0030">Aminoacyl-tRNA synthetase</keyword>
<keyword id="KW-0067">ATP-binding</keyword>
<keyword id="KW-0963">Cytoplasm</keyword>
<keyword id="KW-0436">Ligase</keyword>
<keyword id="KW-0479">Metal-binding</keyword>
<keyword id="KW-0547">Nucleotide-binding</keyword>
<keyword id="KW-0648">Protein biosynthesis</keyword>
<keyword id="KW-1185">Reference proteome</keyword>
<keyword id="KW-0862">Zinc</keyword>
<evidence type="ECO:0000255" key="1">
    <source>
        <dbReference type="HAMAP-Rule" id="MF_02002"/>
    </source>
</evidence>
<name>SYI_PROMH</name>
<organism>
    <name type="scientific">Proteus mirabilis (strain HI4320)</name>
    <dbReference type="NCBI Taxonomy" id="529507"/>
    <lineage>
        <taxon>Bacteria</taxon>
        <taxon>Pseudomonadati</taxon>
        <taxon>Pseudomonadota</taxon>
        <taxon>Gammaproteobacteria</taxon>
        <taxon>Enterobacterales</taxon>
        <taxon>Morganellaceae</taxon>
        <taxon>Proteus</taxon>
    </lineage>
</organism>
<proteinExistence type="inferred from homology"/>
<dbReference type="EC" id="6.1.1.5" evidence="1"/>
<dbReference type="EMBL" id="AM942759">
    <property type="protein sequence ID" value="CAR40255.1"/>
    <property type="molecule type" value="Genomic_DNA"/>
</dbReference>
<dbReference type="RefSeq" id="WP_004248968.1">
    <property type="nucleotide sequence ID" value="NC_010554.1"/>
</dbReference>
<dbReference type="SMR" id="B4F2T5"/>
<dbReference type="EnsemblBacteria" id="CAR40255">
    <property type="protein sequence ID" value="CAR40255"/>
    <property type="gene ID" value="PMI0015"/>
</dbReference>
<dbReference type="GeneID" id="6802405"/>
<dbReference type="KEGG" id="pmr:PMI0015"/>
<dbReference type="eggNOG" id="COG0060">
    <property type="taxonomic scope" value="Bacteria"/>
</dbReference>
<dbReference type="HOGENOM" id="CLU_001493_7_1_6"/>
<dbReference type="Proteomes" id="UP000008319">
    <property type="component" value="Chromosome"/>
</dbReference>
<dbReference type="GO" id="GO:0005829">
    <property type="term" value="C:cytosol"/>
    <property type="evidence" value="ECO:0007669"/>
    <property type="project" value="TreeGrafter"/>
</dbReference>
<dbReference type="GO" id="GO:0002161">
    <property type="term" value="F:aminoacyl-tRNA deacylase activity"/>
    <property type="evidence" value="ECO:0007669"/>
    <property type="project" value="InterPro"/>
</dbReference>
<dbReference type="GO" id="GO:0005524">
    <property type="term" value="F:ATP binding"/>
    <property type="evidence" value="ECO:0007669"/>
    <property type="project" value="UniProtKB-UniRule"/>
</dbReference>
<dbReference type="GO" id="GO:0004822">
    <property type="term" value="F:isoleucine-tRNA ligase activity"/>
    <property type="evidence" value="ECO:0007669"/>
    <property type="project" value="UniProtKB-UniRule"/>
</dbReference>
<dbReference type="GO" id="GO:0000049">
    <property type="term" value="F:tRNA binding"/>
    <property type="evidence" value="ECO:0007669"/>
    <property type="project" value="InterPro"/>
</dbReference>
<dbReference type="GO" id="GO:0008270">
    <property type="term" value="F:zinc ion binding"/>
    <property type="evidence" value="ECO:0007669"/>
    <property type="project" value="UniProtKB-UniRule"/>
</dbReference>
<dbReference type="GO" id="GO:0006428">
    <property type="term" value="P:isoleucyl-tRNA aminoacylation"/>
    <property type="evidence" value="ECO:0007669"/>
    <property type="project" value="UniProtKB-UniRule"/>
</dbReference>
<dbReference type="CDD" id="cd07960">
    <property type="entry name" value="Anticodon_Ia_Ile_BEm"/>
    <property type="match status" value="1"/>
</dbReference>
<dbReference type="CDD" id="cd00818">
    <property type="entry name" value="IleRS_core"/>
    <property type="match status" value="1"/>
</dbReference>
<dbReference type="FunFam" id="1.10.730.20:FF:000001">
    <property type="entry name" value="Isoleucine--tRNA ligase"/>
    <property type="match status" value="1"/>
</dbReference>
<dbReference type="FunFam" id="3.40.50.620:FF:000042">
    <property type="entry name" value="Isoleucine--tRNA ligase"/>
    <property type="match status" value="1"/>
</dbReference>
<dbReference type="FunFam" id="3.40.50.620:FF:000048">
    <property type="entry name" value="Isoleucine--tRNA ligase"/>
    <property type="match status" value="1"/>
</dbReference>
<dbReference type="FunFam" id="3.90.740.10:FF:000002">
    <property type="entry name" value="Isoleucine--tRNA ligase"/>
    <property type="match status" value="1"/>
</dbReference>
<dbReference type="Gene3D" id="1.10.730.20">
    <property type="match status" value="1"/>
</dbReference>
<dbReference type="Gene3D" id="3.40.50.620">
    <property type="entry name" value="HUPs"/>
    <property type="match status" value="2"/>
</dbReference>
<dbReference type="Gene3D" id="3.90.740.10">
    <property type="entry name" value="Valyl/Leucyl/Isoleucyl-tRNA synthetase, editing domain"/>
    <property type="match status" value="1"/>
</dbReference>
<dbReference type="HAMAP" id="MF_02002">
    <property type="entry name" value="Ile_tRNA_synth_type1"/>
    <property type="match status" value="1"/>
</dbReference>
<dbReference type="InterPro" id="IPR001412">
    <property type="entry name" value="aa-tRNA-synth_I_CS"/>
</dbReference>
<dbReference type="InterPro" id="IPR002300">
    <property type="entry name" value="aa-tRNA-synth_Ia"/>
</dbReference>
<dbReference type="InterPro" id="IPR033708">
    <property type="entry name" value="Anticodon_Ile_BEm"/>
</dbReference>
<dbReference type="InterPro" id="IPR002301">
    <property type="entry name" value="Ile-tRNA-ligase"/>
</dbReference>
<dbReference type="InterPro" id="IPR023585">
    <property type="entry name" value="Ile-tRNA-ligase_type1"/>
</dbReference>
<dbReference type="InterPro" id="IPR050081">
    <property type="entry name" value="Ile-tRNA_ligase"/>
</dbReference>
<dbReference type="InterPro" id="IPR013155">
    <property type="entry name" value="M/V/L/I-tRNA-synth_anticd-bd"/>
</dbReference>
<dbReference type="InterPro" id="IPR014729">
    <property type="entry name" value="Rossmann-like_a/b/a_fold"/>
</dbReference>
<dbReference type="InterPro" id="IPR009080">
    <property type="entry name" value="tRNAsynth_Ia_anticodon-bd"/>
</dbReference>
<dbReference type="InterPro" id="IPR009008">
    <property type="entry name" value="Val/Leu/Ile-tRNA-synth_edit"/>
</dbReference>
<dbReference type="InterPro" id="IPR010663">
    <property type="entry name" value="Znf_FPG/IleRS"/>
</dbReference>
<dbReference type="NCBIfam" id="TIGR00392">
    <property type="entry name" value="ileS"/>
    <property type="match status" value="1"/>
</dbReference>
<dbReference type="PANTHER" id="PTHR42765:SF1">
    <property type="entry name" value="ISOLEUCINE--TRNA LIGASE, MITOCHONDRIAL"/>
    <property type="match status" value="1"/>
</dbReference>
<dbReference type="PANTHER" id="PTHR42765">
    <property type="entry name" value="SOLEUCYL-TRNA SYNTHETASE"/>
    <property type="match status" value="1"/>
</dbReference>
<dbReference type="Pfam" id="PF08264">
    <property type="entry name" value="Anticodon_1"/>
    <property type="match status" value="1"/>
</dbReference>
<dbReference type="Pfam" id="PF00133">
    <property type="entry name" value="tRNA-synt_1"/>
    <property type="match status" value="1"/>
</dbReference>
<dbReference type="Pfam" id="PF06827">
    <property type="entry name" value="zf-FPG_IleRS"/>
    <property type="match status" value="1"/>
</dbReference>
<dbReference type="PRINTS" id="PR00984">
    <property type="entry name" value="TRNASYNTHILE"/>
</dbReference>
<dbReference type="SUPFAM" id="SSF47323">
    <property type="entry name" value="Anticodon-binding domain of a subclass of class I aminoacyl-tRNA synthetases"/>
    <property type="match status" value="1"/>
</dbReference>
<dbReference type="SUPFAM" id="SSF52374">
    <property type="entry name" value="Nucleotidylyl transferase"/>
    <property type="match status" value="1"/>
</dbReference>
<dbReference type="SUPFAM" id="SSF50677">
    <property type="entry name" value="ValRS/IleRS/LeuRS editing domain"/>
    <property type="match status" value="1"/>
</dbReference>
<dbReference type="PROSITE" id="PS00178">
    <property type="entry name" value="AA_TRNA_LIGASE_I"/>
    <property type="match status" value="1"/>
</dbReference>
<accession>B4F2T5</accession>
<protein>
    <recommendedName>
        <fullName evidence="1">Isoleucine--tRNA ligase</fullName>
        <ecNumber evidence="1">6.1.1.5</ecNumber>
    </recommendedName>
    <alternativeName>
        <fullName evidence="1">Isoleucyl-tRNA synthetase</fullName>
        <shortName evidence="1">IleRS</shortName>
    </alternativeName>
</protein>
<sequence>MSDYKNTLNLPETGFPMRGDLAKREPEMLSRWYKEGLYQAIRQAKSGKKTFILHDGPPYANGNIHIGHSVNKILKDIIIKSKGLSGFDSPYIPGWDCHGLPIELKVEQIVGKPGEKVSAAQFREECRKYAYEQIEAQKKDFIRLGVLGDWDKPYLTMDYKTEANTIRALARIIANGHLLKGAKPVHWCTACGSSLAEAEVEYYDKTSPSIDVRFRAVDSNAVAAKFGVVTDKPISLVIWTTTPWTLPANRAIALNGEFNYALVSFDDECVILAADLVEHVMKRIGVTDWAVLGECKGSDLELLRFNHPFMGFDVPAILGDHVTLDAGTGAVHTAPGHGPDDFVIGQKYGLEVANPVGPNGCYLPNTYPTLDGVFVFKANDVIVELLKEKGALLHHEAMQHSYPCCWRHKTPVIFRATPQWFIGMDKNGLRQQSLKEIKGVKWIPDWGQARIESMVENRPDWCISRQRTWGTPMSLFVHKETQEPHPRTLELMEEVAKRVEVSGIQAWWDLDIRELLGDEADDYMKTPDTLDVWFDSGSTHSTVVDARPEFHGNSADLYLEGSDQHRGWFMSSLMISTAIKGKAPYREVLTHGFTVDGQGRKMSKSIGNTVSPQDVMNKLGADILRLWVASTDYTGEIAVSDEILKRSADTYRRIRNTARFFLANLNGFDPAKHQVKPEEMVILDRWAVGRAKAAQEDILKHYENYDFHNVIQRLMQFCSVEMGSFYLDIIKDRQYTAKSDSVARRSCQTALYHIIEALVRWMAPIMSFTADEIWAQLPGERAKFVFTQEWYTDLFGLEASETLNDEYWAELLAVRSEVNKVLEQARTDKQLRGSLEAAVTLYADKALAEKLNALGNELRFVLLTSQATVADIHDAPENALASDMAGLKIVLSKAQGEKCPRCWHYATDIGQVAEHADLCGRCVTNVAGNGEERKFA</sequence>
<feature type="chain" id="PRO_1000189187" description="Isoleucine--tRNA ligase">
    <location>
        <begin position="1"/>
        <end position="936"/>
    </location>
</feature>
<feature type="short sequence motif" description="'HIGH' region">
    <location>
        <begin position="58"/>
        <end position="68"/>
    </location>
</feature>
<feature type="short sequence motif" description="'KMSKS' region">
    <location>
        <begin position="601"/>
        <end position="605"/>
    </location>
</feature>
<feature type="binding site" evidence="1">
    <location>
        <position position="560"/>
    </location>
    <ligand>
        <name>L-isoleucyl-5'-AMP</name>
        <dbReference type="ChEBI" id="CHEBI:178002"/>
    </ligand>
</feature>
<feature type="binding site" evidence="1">
    <location>
        <position position="604"/>
    </location>
    <ligand>
        <name>ATP</name>
        <dbReference type="ChEBI" id="CHEBI:30616"/>
    </ligand>
</feature>
<feature type="binding site" evidence="1">
    <location>
        <position position="899"/>
    </location>
    <ligand>
        <name>Zn(2+)</name>
        <dbReference type="ChEBI" id="CHEBI:29105"/>
    </ligand>
</feature>
<feature type="binding site" evidence="1">
    <location>
        <position position="902"/>
    </location>
    <ligand>
        <name>Zn(2+)</name>
        <dbReference type="ChEBI" id="CHEBI:29105"/>
    </ligand>
</feature>
<feature type="binding site" evidence="1">
    <location>
        <position position="919"/>
    </location>
    <ligand>
        <name>Zn(2+)</name>
        <dbReference type="ChEBI" id="CHEBI:29105"/>
    </ligand>
</feature>
<feature type="binding site" evidence="1">
    <location>
        <position position="922"/>
    </location>
    <ligand>
        <name>Zn(2+)</name>
        <dbReference type="ChEBI" id="CHEBI:29105"/>
    </ligand>
</feature>